<keyword id="KW-1003">Cell membrane</keyword>
<keyword id="KW-0472">Membrane</keyword>
<keyword id="KW-1185">Reference proteome</keyword>
<keyword id="KW-0812">Transmembrane</keyword>
<keyword id="KW-1133">Transmembrane helix</keyword>
<keyword id="KW-0843">Virulence</keyword>
<name>VIRB3_BRUA2</name>
<accession>Q2YIT7</accession>
<accession>Q57A16</accession>
<accession>Q7BMZ8</accession>
<comment type="function">
    <text evidence="2">The virB operon is essential for intracellular survival and is not involved in the invasion process. Constitutes a major determinant of virulence in mice.</text>
</comment>
<comment type="subcellular location">
    <subcellularLocation>
        <location evidence="3">Cell membrane</location>
        <topology evidence="3">Multi-pass membrane protein</topology>
    </subcellularLocation>
</comment>
<comment type="miscellaneous">
    <text>Transcription is turned on at the beginning of the stationary phase of vegetative growth.</text>
</comment>
<comment type="similarity">
    <text evidence="3">Belongs to the virB3 family.</text>
</comment>
<evidence type="ECO:0000255" key="1"/>
<evidence type="ECO:0000269" key="2">
    <source>
    </source>
</evidence>
<evidence type="ECO:0000305" key="3"/>
<sequence>MTTAPQESNARSAGYRGDPIFKGCTRPAMLFGVPVIPLVIVGGSIVLLSVWISMFILPLIVPIVLVMRQITQTDDQMFRLLGLKAQFRLIHFNRTGRFWRASAYSPIAFTKRKRES</sequence>
<proteinExistence type="inferred from homology"/>
<protein>
    <recommendedName>
        <fullName>Type IV secretion system protein virB3</fullName>
    </recommendedName>
</protein>
<gene>
    <name type="primary">virB3</name>
    <name type="ordered locus">BAB2_0066</name>
</gene>
<reference key="1">
    <citation type="journal article" date="2000" name="J. Bacteriol.">
        <title>A homologue of an operon required for DNA transfer in Agrobacterium is required in Brucella abortus for virulence and intracellular multiplication.</title>
        <authorList>
            <person name="Sieira R."/>
            <person name="Comerci D.J."/>
            <person name="Sanchez D.O."/>
            <person name="Ugalde R.A."/>
        </authorList>
    </citation>
    <scope>NUCLEOTIDE SEQUENCE [GENOMIC DNA]</scope>
    <scope>TRANSCRIPTION</scope>
    <scope>FUNCTION</scope>
</reference>
<reference key="2">
    <citation type="journal article" date="2005" name="Infect. Immun.">
        <title>Whole-genome analyses of speciation events in pathogenic Brucellae.</title>
        <authorList>
            <person name="Chain P.S."/>
            <person name="Comerci D.J."/>
            <person name="Tolmasky M.E."/>
            <person name="Larimer F.W."/>
            <person name="Malfatti S.A."/>
            <person name="Vergez L.M."/>
            <person name="Aguero F."/>
            <person name="Land M.L."/>
            <person name="Ugalde R.A."/>
            <person name="Garcia E."/>
        </authorList>
    </citation>
    <scope>NUCLEOTIDE SEQUENCE [LARGE SCALE GENOMIC DNA]</scope>
    <source>
        <strain>2308</strain>
    </source>
</reference>
<dbReference type="EMBL" id="AF226278">
    <property type="protein sequence ID" value="AAF73896.1"/>
    <property type="molecule type" value="Genomic_DNA"/>
</dbReference>
<dbReference type="EMBL" id="AM040265">
    <property type="protein sequence ID" value="CAJ12232.1"/>
    <property type="molecule type" value="Genomic_DNA"/>
</dbReference>
<dbReference type="RefSeq" id="WP_002966512.1">
    <property type="nucleotide sequence ID" value="NZ_KN046823.1"/>
</dbReference>
<dbReference type="SMR" id="Q2YIT7"/>
<dbReference type="STRING" id="359391.BAB2_0066"/>
<dbReference type="KEGG" id="bmf:BAB2_0066"/>
<dbReference type="PATRIC" id="fig|359391.11.peg.2013"/>
<dbReference type="HOGENOM" id="CLU_158477_0_0_5"/>
<dbReference type="BioCyc" id="MetaCyc:BAB_RS26675-MONOMER"/>
<dbReference type="PHI-base" id="PHI:7606"/>
<dbReference type="PRO" id="PR:Q2YIT7"/>
<dbReference type="Proteomes" id="UP000002719">
    <property type="component" value="Chromosome II"/>
</dbReference>
<dbReference type="GO" id="GO:0005886">
    <property type="term" value="C:plasma membrane"/>
    <property type="evidence" value="ECO:0007669"/>
    <property type="project" value="UniProtKB-SubCell"/>
</dbReference>
<dbReference type="InterPro" id="IPR007792">
    <property type="entry name" value="T4SS_VirB3/TrbD/AvhB"/>
</dbReference>
<dbReference type="Pfam" id="PF05101">
    <property type="entry name" value="VirB3"/>
    <property type="match status" value="1"/>
</dbReference>
<feature type="chain" id="PRO_0000290172" description="Type IV secretion system protein virB3">
    <location>
        <begin position="1"/>
        <end position="116"/>
    </location>
</feature>
<feature type="transmembrane region" description="Helical" evidence="1">
    <location>
        <begin position="23"/>
        <end position="43"/>
    </location>
</feature>
<feature type="transmembrane region" description="Helical" evidence="1">
    <location>
        <begin position="45"/>
        <end position="65"/>
    </location>
</feature>
<organism>
    <name type="scientific">Brucella abortus (strain 2308)</name>
    <dbReference type="NCBI Taxonomy" id="359391"/>
    <lineage>
        <taxon>Bacteria</taxon>
        <taxon>Pseudomonadati</taxon>
        <taxon>Pseudomonadota</taxon>
        <taxon>Alphaproteobacteria</taxon>
        <taxon>Hyphomicrobiales</taxon>
        <taxon>Brucellaceae</taxon>
        <taxon>Brucella/Ochrobactrum group</taxon>
        <taxon>Brucella</taxon>
    </lineage>
</organism>